<keyword id="KW-0025">Alternative splicing</keyword>
<keyword id="KW-0175">Coiled coil</keyword>
<keyword id="KW-0963">Cytoplasm</keyword>
<keyword id="KW-0206">Cytoskeleton</keyword>
<keyword id="KW-0217">Developmental protein</keyword>
<keyword id="KW-0325">Glycoprotein</keyword>
<keyword id="KW-0597">Phosphoprotein</keyword>
<keyword id="KW-1185">Reference proteome</keyword>
<accession>A2AQ25</accession>
<accession>A2AUE9</accession>
<accession>A2AUF0</accession>
<accession>A2AUF1</accession>
<accession>Q75UV8</accession>
<accession>Q75UV9</accession>
<accession>Q80VK2</accession>
<accession>Q8BHX8</accession>
<accession>Q8BHY1</accession>
<accession>Q8CHA8</accession>
<accession>Q8R0K6</accession>
<sequence length="1946" mass="213037">MEESEGQKCEPNLPPSGDSRQMPQQGRSNLHVTSQEDAACRRPRERLSNGNARAQVSKPARNIPRRHTLGGPRSSKEILGMQPSEMDRKREAFLEHLKQKYPHHATAIMGHQERLRDQTKSPKLSHSPQPPNLGDPVEHLSETSGDSLEAMSEGEVPSPFARGSRTRASLPVVRSANQTKERSLGVLYLQYGDETKQLRMPNEVTSTDTIRALFVSAFPQQLTMKMLESPSVAIYIKDDSRNVYYELNDVRNIQDRSLLKVYNKDPSHAFNHMTKAVNGDMRMQREIVYARGDGLVAPRPGSVAHPPHVIPNSPPSTPVPHSLPPSPSRIPYGGSRPMAIPGNATIPRDRLSSLPVSRSISPSPSAILERRDVKPDEDMSSKNLVMFRNEGFYADPYLYHEGRMSIASSHGGHPLDVPDHVIAYHRTAIRSASAYCSPSLQAEMHMEQSLYRQKSRKYPDSHLPTLGSKTPPASPHRVGDLRMIDLHPHLNTHGPPHTLQPDRASPSRQSFKKEPGTLVYIEKPRNTSGLSSLVDLGPPLVEKQGFAYSTTTIPKDRETRERMQAMEKQIASLTGLVQSALFKGPITSSSKEASSEKMVKATANRNQADGAGTAHVSAGKVLGSVEFSLPPSQPLPAGTSPIHTSLLDMRRNVAELRLQLQQMRQLQLQNQEILRAMMKKAELEISNKVKETMKRLEDPVQRQRTLVEQERQKYLHEEERIVKKLCELEDFVEDLKKDSSSTGRVVTLKDVEDGAFLLRQVGEAVATLKGEFPTLQNKMRAVLRIEVEAVRFLKEEPHKLDSLLKRVRSMTDVLTMLRRHVTDGLLKGTDASQAAQYVAMEKATAAEVLKHQEETAHAPGQPLHCSTGSPGDVKSEVVPLSTMTVHHVQSSPVVMQPSQHSSALMNPAQNLPGGTRPHTASPPAITQEVTSAQSAPGPQSPQTPVNGSSMQSLFIEEIHSVSAKNRAVSIEKAEKKWEEKRQNLEHYNGKEFEKLLEEAQANIMKSIPNLEMPPASSPVSKGDAAGDKLELSEDSPNSEQELDKIGGKSPPPPPPPPRRSYLPGSGLTTTRSGDVVYTGRSMSKVSSEDPGPTPQTRATKCPPEEPASAWAPSPPPVPAPSSKEEEEEEEEGDKIMAELQAFQKCSFMDVNPNSHAEQSRANSHLKDTRAGATAPPKEKKNLEFYHEDVRKSDVECENGPQVESQKVTAGALRPSGPPKWERVMVDSISDTSRTSECRADTFTEENATPNKSLFRDSRNYSQKNVPKVSFSSSGLNSLEGEINKGPNVSGLQCAIPDLENQKLNFGKTKEIGQQGQENADKSHIPLPTRSAEFSIHDVKTQDQDVPVTGYGQVVLRSKVGRHANMNMNEDGESTPSSPSEEHTATDNIAFMITKTAVQVLSSGEVHDIVSQKGQDVQTVNIDGRKETASQHEGTEGEEPVVCLDKKPVIIIFDEPMDIRSAYKRLSTIFEECDEELERMLTEEKIEEEEEDENEDSGVRTSSQMSCEQVDSRSDRMGQKAETQSQPHVLSAELLTPGVQGVRKAEQRKLSSADSPDSGNKCGMVDDQFESPKKKFKFKFPKKQLAALTQAIRTGTKTGKKTLQVVVYEEEEEDGTLKQHKEAKRFEITRSQPEDALKTMARRQEQLSPEGTLPASRTDEIRKSTYRTLDSLEQTIKQLENTISEMSPRALVDTSCSSNRDCGASLPHMAQEVSPRSLLVLDEVPPAPEPPTSISPASRKGSSTTPQTSRMPVPMTSKNRPGSLDKASKQSKLQDPRQYRQANGSAKKAGGDCKPTSPSLPASKIPALSPSSGKSSSLPSASGDSSNLPNAPATKPSIASTPLSPQAGRSAHSASLIPSVSNGSLKFQSPPHAGKGHHHLSFALQTQNGRAAPTTSSSSSPPSPASPTSLNQGARGIRTIHTPSLASYKAQNGSSSKATPSTAKETS</sequence>
<gene>
    <name evidence="19" type="primary">Skt</name>
    <name evidence="20" type="synonym">Etl4</name>
    <name evidence="18" type="synonym">Kiaa1217</name>
</gene>
<organism>
    <name type="scientific">Mus musculus</name>
    <name type="common">Mouse</name>
    <dbReference type="NCBI Taxonomy" id="10090"/>
    <lineage>
        <taxon>Eukaryota</taxon>
        <taxon>Metazoa</taxon>
        <taxon>Chordata</taxon>
        <taxon>Craniata</taxon>
        <taxon>Vertebrata</taxon>
        <taxon>Euteleostomi</taxon>
        <taxon>Mammalia</taxon>
        <taxon>Eutheria</taxon>
        <taxon>Euarchontoglires</taxon>
        <taxon>Glires</taxon>
        <taxon>Rodentia</taxon>
        <taxon>Myomorpha</taxon>
        <taxon>Muroidea</taxon>
        <taxon>Muridae</taxon>
        <taxon>Murinae</taxon>
        <taxon>Mus</taxon>
        <taxon>Mus</taxon>
    </lineage>
</organism>
<feature type="chain" id="PRO_0000287898" description="Sickle tail protein">
    <location>
        <begin position="1"/>
        <end position="1946"/>
    </location>
</feature>
<feature type="region of interest" description="Disordered" evidence="3">
    <location>
        <begin position="1"/>
        <end position="83"/>
    </location>
</feature>
<feature type="region of interest" description="Disordered" evidence="3">
    <location>
        <begin position="113"/>
        <end position="176"/>
    </location>
</feature>
<feature type="region of interest" description="Disordered" evidence="3">
    <location>
        <begin position="305"/>
        <end position="324"/>
    </location>
</feature>
<feature type="region of interest" description="Disordered" evidence="3">
    <location>
        <begin position="339"/>
        <end position="374"/>
    </location>
</feature>
<feature type="region of interest" description="Disordered" evidence="3">
    <location>
        <begin position="455"/>
        <end position="512"/>
    </location>
</feature>
<feature type="region of interest" description="Disordered" evidence="3">
    <location>
        <begin position="853"/>
        <end position="875"/>
    </location>
</feature>
<feature type="region of interest" description="Disordered" evidence="3">
    <location>
        <begin position="891"/>
        <end position="947"/>
    </location>
</feature>
<feature type="region of interest" description="Disordered" evidence="3">
    <location>
        <begin position="1008"/>
        <end position="1221"/>
    </location>
</feature>
<feature type="region of interest" description="Disordered" evidence="3">
    <location>
        <begin position="1482"/>
        <end position="1567"/>
    </location>
</feature>
<feature type="region of interest" description="Disordered" evidence="3">
    <location>
        <begin position="1622"/>
        <end position="1664"/>
    </location>
</feature>
<feature type="region of interest" description="Disordered" evidence="3">
    <location>
        <begin position="1691"/>
        <end position="1946"/>
    </location>
</feature>
<feature type="coiled-coil region" evidence="2">
    <location>
        <begin position="557"/>
        <end position="581"/>
    </location>
</feature>
<feature type="coiled-coil region" evidence="2">
    <location>
        <begin position="644"/>
        <end position="685"/>
    </location>
</feature>
<feature type="coiled-coil region" evidence="2">
    <location>
        <begin position="962"/>
        <end position="990"/>
    </location>
</feature>
<feature type="coiled-coil region" evidence="2">
    <location>
        <begin position="1469"/>
        <end position="1495"/>
    </location>
</feature>
<feature type="coiled-coil region" evidence="2">
    <location>
        <begin position="1659"/>
        <end position="1688"/>
    </location>
</feature>
<feature type="compositionally biased region" description="Polar residues" evidence="3">
    <location>
        <begin position="18"/>
        <end position="36"/>
    </location>
</feature>
<feature type="compositionally biased region" description="Basic and acidic residues" evidence="3">
    <location>
        <begin position="38"/>
        <end position="47"/>
    </location>
</feature>
<feature type="compositionally biased region" description="Pro residues" evidence="3">
    <location>
        <begin position="308"/>
        <end position="324"/>
    </location>
</feature>
<feature type="compositionally biased region" description="Low complexity" evidence="3">
    <location>
        <begin position="352"/>
        <end position="367"/>
    </location>
</feature>
<feature type="compositionally biased region" description="Basic and acidic residues" evidence="3">
    <location>
        <begin position="477"/>
        <end position="488"/>
    </location>
</feature>
<feature type="compositionally biased region" description="Polar residues" evidence="3">
    <location>
        <begin position="891"/>
        <end position="909"/>
    </location>
</feature>
<feature type="compositionally biased region" description="Polar residues" evidence="3">
    <location>
        <begin position="927"/>
        <end position="947"/>
    </location>
</feature>
<feature type="compositionally biased region" description="Pro residues" evidence="3">
    <location>
        <begin position="1049"/>
        <end position="1058"/>
    </location>
</feature>
<feature type="compositionally biased region" description="Polar residues" evidence="3">
    <location>
        <begin position="1151"/>
        <end position="1162"/>
    </location>
</feature>
<feature type="compositionally biased region" description="Basic and acidic residues" evidence="3">
    <location>
        <begin position="1176"/>
        <end position="1194"/>
    </location>
</feature>
<feature type="compositionally biased region" description="Acidic residues" evidence="3">
    <location>
        <begin position="1484"/>
        <end position="1495"/>
    </location>
</feature>
<feature type="compositionally biased region" description="Polar residues" evidence="3">
    <location>
        <begin position="1498"/>
        <end position="1508"/>
    </location>
</feature>
<feature type="compositionally biased region" description="Basic and acidic residues" evidence="3">
    <location>
        <begin position="1509"/>
        <end position="1518"/>
    </location>
</feature>
<feature type="compositionally biased region" description="Basic and acidic residues" evidence="3">
    <location>
        <begin position="1622"/>
        <end position="1644"/>
    </location>
</feature>
<feature type="compositionally biased region" description="Polar residues" evidence="3">
    <location>
        <begin position="1739"/>
        <end position="1759"/>
    </location>
</feature>
<feature type="compositionally biased region" description="Basic and acidic residues" evidence="3">
    <location>
        <begin position="1765"/>
        <end position="1777"/>
    </location>
</feature>
<feature type="compositionally biased region" description="Low complexity" evidence="3">
    <location>
        <begin position="1806"/>
        <end position="1825"/>
    </location>
</feature>
<feature type="compositionally biased region" description="Polar residues" evidence="3">
    <location>
        <begin position="1851"/>
        <end position="1866"/>
    </location>
</feature>
<feature type="compositionally biased region" description="Low complexity" evidence="3">
    <location>
        <begin position="1890"/>
        <end position="1899"/>
    </location>
</feature>
<feature type="compositionally biased region" description="Polar residues" evidence="3">
    <location>
        <begin position="1920"/>
        <end position="1946"/>
    </location>
</feature>
<feature type="modified residue" description="Phosphoserine" evidence="22">
    <location>
        <position position="169"/>
    </location>
</feature>
<feature type="modified residue" description="Phosphotyrosine" evidence="22">
    <location>
        <position position="244"/>
    </location>
</feature>
<feature type="modified residue" description="Phosphoserine" evidence="22">
    <location>
        <position position="361"/>
    </location>
</feature>
<feature type="modified residue" description="Phosphoserine" evidence="22">
    <location>
        <position position="365"/>
    </location>
</feature>
<feature type="modified residue" description="Phosphotyrosine" evidence="1">
    <location>
        <position position="393"/>
    </location>
</feature>
<feature type="modified residue" description="Phosphothreonine" evidence="1">
    <location>
        <position position="470"/>
    </location>
</feature>
<feature type="modified residue" description="Phosphoserine" evidence="21">
    <location>
        <position position="474"/>
    </location>
</feature>
<feature type="modified residue" description="Phosphoserine" evidence="22">
    <location>
        <position position="809"/>
    </location>
</feature>
<feature type="modified residue" description="Phosphoserine" evidence="22">
    <location>
        <position position="1032"/>
    </location>
</feature>
<feature type="modified residue" description="Phosphoserine" evidence="22">
    <location>
        <position position="1035"/>
    </location>
</feature>
<feature type="modified residue" description="Phosphoserine" evidence="22">
    <location>
        <position position="1038"/>
    </location>
</feature>
<feature type="modified residue" description="Phosphoserine" evidence="22">
    <location>
        <position position="1049"/>
    </location>
</feature>
<feature type="modified residue" description="Phosphoserine" evidence="22">
    <location>
        <position position="1466"/>
    </location>
</feature>
<feature type="modified residue" description="Phosphoserine" evidence="1">
    <location>
        <position position="1741"/>
    </location>
</feature>
<feature type="modified residue" description="Phosphoserine" evidence="22">
    <location>
        <position position="1843"/>
    </location>
</feature>
<feature type="modified residue" description="Phosphoserine" evidence="22">
    <location>
        <position position="1899"/>
    </location>
</feature>
<feature type="modified residue" description="Phosphoserine" evidence="22">
    <location>
        <position position="1902"/>
    </location>
</feature>
<feature type="modified residue" description="Phosphoserine" evidence="22">
    <location>
        <position position="1905"/>
    </location>
</feature>
<feature type="glycosylation site" description="O-linked (GlcNAc) serine" evidence="9">
    <location>
        <position position="357"/>
    </location>
</feature>
<feature type="splice variant" id="VSP_052416" description="In isoform 2, isoform 5, isoform 6 and isoform 9." evidence="12">
    <location>
        <begin position="1"/>
        <end position="282"/>
    </location>
</feature>
<feature type="splice variant" id="VSP_052417" description="In isoform 7." evidence="11 12">
    <location>
        <begin position="252"/>
        <end position="1946"/>
    </location>
</feature>
<feature type="splice variant" id="VSP_052418" description="In isoform 2, isoform 3, isoform 4, isoform 5, isoform 6, isoform 8 and isoform 9." evidence="10 11 12 13">
    <location>
        <begin position="560"/>
        <end position="594"/>
    </location>
</feature>
<feature type="splice variant" id="VSP_052419" description="In isoform 8." evidence="10">
    <location>
        <begin position="885"/>
        <end position="1755"/>
    </location>
</feature>
<feature type="splice variant" id="VSP_052420" description="In isoform 4 and isoform 9." evidence="12 13">
    <location>
        <begin position="961"/>
        <end position="971"/>
    </location>
</feature>
<feature type="splice variant" id="VSP_052421" description="In isoform 3, isoform 4 and isoform 6." evidence="11 13">
    <location>
        <begin position="1181"/>
        <end position="1739"/>
    </location>
</feature>
<feature type="splice variant" id="VSP_052422" description="In isoform 9." evidence="12">
    <original>NLEFYHEDVRK</original>
    <variation>VTCGSYTFTIQ</variation>
    <location>
        <begin position="1181"/>
        <end position="1191"/>
    </location>
</feature>
<feature type="splice variant" id="VSP_052423" description="In isoform 9." evidence="12">
    <location>
        <begin position="1192"/>
        <end position="1946"/>
    </location>
</feature>
<feature type="splice variant" id="VSP_052424" description="In isoform 5." evidence="14">
    <location>
        <begin position="1207"/>
        <end position="1739"/>
    </location>
</feature>
<feature type="splice variant" id="VSP_052425" description="In isoform 5 and isoform 6." evidence="14">
    <original>ANGS</original>
    <variation>VVLP</variation>
    <location>
        <begin position="1781"/>
        <end position="1784"/>
    </location>
</feature>
<feature type="splice variant" id="VSP_052426" description="In isoform 5 and isoform 6." evidence="14">
    <location>
        <begin position="1785"/>
        <end position="1946"/>
    </location>
</feature>
<feature type="sequence conflict" description="In Ref. 5; AAH50016." evidence="14" ref="5">
    <original>R</original>
    <variation>H</variation>
    <location>
        <position position="41"/>
    </location>
</feature>
<feature type="sequence conflict" description="In Ref. 2; BAC41473." evidence="14" ref="2">
    <original>T</original>
    <variation>R</variation>
    <location>
        <position position="119"/>
    </location>
</feature>
<feature type="sequence conflict" description="In Ref. 2; BAC41473." evidence="14" ref="2">
    <original>T</original>
    <variation>A</variation>
    <location>
        <position position="551"/>
    </location>
</feature>
<feature type="sequence conflict" description="In Ref. 2; BAC41473." evidence="14" ref="2">
    <original>R</original>
    <variation>Q</variation>
    <location>
        <position position="818"/>
    </location>
</feature>
<proteinExistence type="evidence at protein level"/>
<evidence type="ECO:0000250" key="1">
    <source>
        <dbReference type="UniProtKB" id="Q5T5P2"/>
    </source>
</evidence>
<evidence type="ECO:0000255" key="2"/>
<evidence type="ECO:0000256" key="3">
    <source>
        <dbReference type="SAM" id="MobiDB-lite"/>
    </source>
</evidence>
<evidence type="ECO:0000269" key="4">
    <source>
    </source>
</evidence>
<evidence type="ECO:0000269" key="5">
    <source>
    </source>
</evidence>
<evidence type="ECO:0000269" key="6">
    <source>
    </source>
</evidence>
<evidence type="ECO:0000269" key="7">
    <source>
    </source>
</evidence>
<evidence type="ECO:0000269" key="8">
    <source>
    </source>
</evidence>
<evidence type="ECO:0000269" key="9">
    <source>
    </source>
</evidence>
<evidence type="ECO:0000303" key="10">
    <source>
    </source>
</evidence>
<evidence type="ECO:0000303" key="11">
    <source>
    </source>
</evidence>
<evidence type="ECO:0000303" key="12">
    <source>
    </source>
</evidence>
<evidence type="ECO:0000303" key="13">
    <source>
    </source>
</evidence>
<evidence type="ECO:0000305" key="14"/>
<evidence type="ECO:0000312" key="15">
    <source>
        <dbReference type="EMBL" id="AAH50016.1"/>
    </source>
</evidence>
<evidence type="ECO:0000312" key="16">
    <source>
        <dbReference type="EMBL" id="BAC35121.1"/>
    </source>
</evidence>
<evidence type="ECO:0000312" key="17">
    <source>
        <dbReference type="EMBL" id="BAC35783.1"/>
    </source>
</evidence>
<evidence type="ECO:0000312" key="18">
    <source>
        <dbReference type="EMBL" id="BAC41473.2"/>
    </source>
</evidence>
<evidence type="ECO:0000312" key="19">
    <source>
        <dbReference type="EMBL" id="BAD14929.1"/>
    </source>
</evidence>
<evidence type="ECO:0000312" key="20">
    <source>
        <dbReference type="MGI" id="MGI:95454"/>
    </source>
</evidence>
<evidence type="ECO:0007744" key="21">
    <source>
    </source>
</evidence>
<evidence type="ECO:0007744" key="22">
    <source>
    </source>
</evidence>
<name>SKT_MOUSE</name>
<reference evidence="14 19" key="1">
    <citation type="journal article" date="2006" name="Genetics">
        <title>A novel murine gene, Sickle tail, linked to the Danforth's short tail locus, is required for normal development of the intervertebral disc.</title>
        <authorList>
            <person name="Semba K."/>
            <person name="Araki K."/>
            <person name="Li Z."/>
            <person name="Matsumoto K."/>
            <person name="Suzuki M."/>
            <person name="Nakagata N."/>
            <person name="Takagi K."/>
            <person name="Takeya M."/>
            <person name="Yoshinobu K."/>
            <person name="Araki M."/>
            <person name="Imai K."/>
            <person name="Abe K."/>
            <person name="Yamamura K."/>
        </authorList>
    </citation>
    <scope>NUCLEOTIDE SEQUENCE [MRNA] (ISOFORMS 3 AND 4)</scope>
    <scope>FUNCTION</scope>
    <scope>SUBCELLULAR LOCATION</scope>
    <scope>TISSUE SPECIFICITY</scope>
    <scope>DISRUPTION PHENOTYPE</scope>
</reference>
<reference evidence="14 18" key="2">
    <citation type="journal article" date="2002" name="DNA Res.">
        <title>Prediction of the coding sequences of mouse homologues of KIAA gene: I. The complete nucleotide sequences of 100 mouse KIAA-homologous cDNAs identified by screening of terminal sequences of cDNA clones randomly sampled from size-fractionated libraries.</title>
        <authorList>
            <person name="Okazaki N."/>
            <person name="Kikuno R."/>
            <person name="Ohara R."/>
            <person name="Inamoto S."/>
            <person name="Hara Y."/>
            <person name="Nagase T."/>
            <person name="Ohara O."/>
            <person name="Koga H."/>
        </authorList>
    </citation>
    <scope>NUCLEOTIDE SEQUENCE [LARGE SCALE MRNA] (ISOFORM 8)</scope>
    <source>
        <tissue evidence="18">Embryonic tail</tissue>
    </source>
</reference>
<reference evidence="14 17" key="3">
    <citation type="journal article" date="2005" name="Science">
        <title>The transcriptional landscape of the mammalian genome.</title>
        <authorList>
            <person name="Carninci P."/>
            <person name="Kasukawa T."/>
            <person name="Katayama S."/>
            <person name="Gough J."/>
            <person name="Frith M.C."/>
            <person name="Maeda N."/>
            <person name="Oyama R."/>
            <person name="Ravasi T."/>
            <person name="Lenhard B."/>
            <person name="Wells C."/>
            <person name="Kodzius R."/>
            <person name="Shimokawa K."/>
            <person name="Bajic V.B."/>
            <person name="Brenner S.E."/>
            <person name="Batalov S."/>
            <person name="Forrest A.R."/>
            <person name="Zavolan M."/>
            <person name="Davis M.J."/>
            <person name="Wilming L.G."/>
            <person name="Aidinis V."/>
            <person name="Allen J.E."/>
            <person name="Ambesi-Impiombato A."/>
            <person name="Apweiler R."/>
            <person name="Aturaliya R.N."/>
            <person name="Bailey T.L."/>
            <person name="Bansal M."/>
            <person name="Baxter L."/>
            <person name="Beisel K.W."/>
            <person name="Bersano T."/>
            <person name="Bono H."/>
            <person name="Chalk A.M."/>
            <person name="Chiu K.P."/>
            <person name="Choudhary V."/>
            <person name="Christoffels A."/>
            <person name="Clutterbuck D.R."/>
            <person name="Crowe M.L."/>
            <person name="Dalla E."/>
            <person name="Dalrymple B.P."/>
            <person name="de Bono B."/>
            <person name="Della Gatta G."/>
            <person name="di Bernardo D."/>
            <person name="Down T."/>
            <person name="Engstrom P."/>
            <person name="Fagiolini M."/>
            <person name="Faulkner G."/>
            <person name="Fletcher C.F."/>
            <person name="Fukushima T."/>
            <person name="Furuno M."/>
            <person name="Futaki S."/>
            <person name="Gariboldi M."/>
            <person name="Georgii-Hemming P."/>
            <person name="Gingeras T.R."/>
            <person name="Gojobori T."/>
            <person name="Green R.E."/>
            <person name="Gustincich S."/>
            <person name="Harbers M."/>
            <person name="Hayashi Y."/>
            <person name="Hensch T.K."/>
            <person name="Hirokawa N."/>
            <person name="Hill D."/>
            <person name="Huminiecki L."/>
            <person name="Iacono M."/>
            <person name="Ikeo K."/>
            <person name="Iwama A."/>
            <person name="Ishikawa T."/>
            <person name="Jakt M."/>
            <person name="Kanapin A."/>
            <person name="Katoh M."/>
            <person name="Kawasawa Y."/>
            <person name="Kelso J."/>
            <person name="Kitamura H."/>
            <person name="Kitano H."/>
            <person name="Kollias G."/>
            <person name="Krishnan S.P."/>
            <person name="Kruger A."/>
            <person name="Kummerfeld S.K."/>
            <person name="Kurochkin I.V."/>
            <person name="Lareau L.F."/>
            <person name="Lazarevic D."/>
            <person name="Lipovich L."/>
            <person name="Liu J."/>
            <person name="Liuni S."/>
            <person name="McWilliam S."/>
            <person name="Madan Babu M."/>
            <person name="Madera M."/>
            <person name="Marchionni L."/>
            <person name="Matsuda H."/>
            <person name="Matsuzawa S."/>
            <person name="Miki H."/>
            <person name="Mignone F."/>
            <person name="Miyake S."/>
            <person name="Morris K."/>
            <person name="Mottagui-Tabar S."/>
            <person name="Mulder N."/>
            <person name="Nakano N."/>
            <person name="Nakauchi H."/>
            <person name="Ng P."/>
            <person name="Nilsson R."/>
            <person name="Nishiguchi S."/>
            <person name="Nishikawa S."/>
            <person name="Nori F."/>
            <person name="Ohara O."/>
            <person name="Okazaki Y."/>
            <person name="Orlando V."/>
            <person name="Pang K.C."/>
            <person name="Pavan W.J."/>
            <person name="Pavesi G."/>
            <person name="Pesole G."/>
            <person name="Petrovsky N."/>
            <person name="Piazza S."/>
            <person name="Reed J."/>
            <person name="Reid J.F."/>
            <person name="Ring B.Z."/>
            <person name="Ringwald M."/>
            <person name="Rost B."/>
            <person name="Ruan Y."/>
            <person name="Salzberg S.L."/>
            <person name="Sandelin A."/>
            <person name="Schneider C."/>
            <person name="Schoenbach C."/>
            <person name="Sekiguchi K."/>
            <person name="Semple C.A."/>
            <person name="Seno S."/>
            <person name="Sessa L."/>
            <person name="Sheng Y."/>
            <person name="Shibata Y."/>
            <person name="Shimada H."/>
            <person name="Shimada K."/>
            <person name="Silva D."/>
            <person name="Sinclair B."/>
            <person name="Sperling S."/>
            <person name="Stupka E."/>
            <person name="Sugiura K."/>
            <person name="Sultana R."/>
            <person name="Takenaka Y."/>
            <person name="Taki K."/>
            <person name="Tammoja K."/>
            <person name="Tan S.L."/>
            <person name="Tang S."/>
            <person name="Taylor M.S."/>
            <person name="Tegner J."/>
            <person name="Teichmann S.A."/>
            <person name="Ueda H.R."/>
            <person name="van Nimwegen E."/>
            <person name="Verardo R."/>
            <person name="Wei C.L."/>
            <person name="Yagi K."/>
            <person name="Yamanishi H."/>
            <person name="Zabarovsky E."/>
            <person name="Zhu S."/>
            <person name="Zimmer A."/>
            <person name="Hide W."/>
            <person name="Bult C."/>
            <person name="Grimmond S.M."/>
            <person name="Teasdale R.D."/>
            <person name="Liu E.T."/>
            <person name="Brusic V."/>
            <person name="Quackenbush J."/>
            <person name="Wahlestedt C."/>
            <person name="Mattick J.S."/>
            <person name="Hume D.A."/>
            <person name="Kai C."/>
            <person name="Sasaki D."/>
            <person name="Tomaru Y."/>
            <person name="Fukuda S."/>
            <person name="Kanamori-Katayama M."/>
            <person name="Suzuki M."/>
            <person name="Aoki J."/>
            <person name="Arakawa T."/>
            <person name="Iida J."/>
            <person name="Imamura K."/>
            <person name="Itoh M."/>
            <person name="Kato T."/>
            <person name="Kawaji H."/>
            <person name="Kawagashira N."/>
            <person name="Kawashima T."/>
            <person name="Kojima M."/>
            <person name="Kondo S."/>
            <person name="Konno H."/>
            <person name="Nakano K."/>
            <person name="Ninomiya N."/>
            <person name="Nishio T."/>
            <person name="Okada M."/>
            <person name="Plessy C."/>
            <person name="Shibata K."/>
            <person name="Shiraki T."/>
            <person name="Suzuki S."/>
            <person name="Tagami M."/>
            <person name="Waki K."/>
            <person name="Watahiki A."/>
            <person name="Okamura-Oho Y."/>
            <person name="Suzuki H."/>
            <person name="Kawai J."/>
            <person name="Hayashizaki Y."/>
        </authorList>
    </citation>
    <scope>NUCLEOTIDE SEQUENCE [LARGE SCALE MRNA] (ISOFORMS 7 AND 9)</scope>
    <source>
        <strain evidence="17">C57BL/6J</strain>
        <tissue evidence="16">Kidney</tissue>
        <tissue evidence="17">Ovary</tissue>
    </source>
</reference>
<reference key="4">
    <citation type="journal article" date="2009" name="PLoS Biol.">
        <title>Lineage-specific biology revealed by a finished genome assembly of the mouse.</title>
        <authorList>
            <person name="Church D.M."/>
            <person name="Goodstadt L."/>
            <person name="Hillier L.W."/>
            <person name="Zody M.C."/>
            <person name="Goldstein S."/>
            <person name="She X."/>
            <person name="Bult C.J."/>
            <person name="Agarwala R."/>
            <person name="Cherry J.L."/>
            <person name="DiCuccio M."/>
            <person name="Hlavina W."/>
            <person name="Kapustin Y."/>
            <person name="Meric P."/>
            <person name="Maglott D."/>
            <person name="Birtle Z."/>
            <person name="Marques A.C."/>
            <person name="Graves T."/>
            <person name="Zhou S."/>
            <person name="Teague B."/>
            <person name="Potamousis K."/>
            <person name="Churas C."/>
            <person name="Place M."/>
            <person name="Herschleb J."/>
            <person name="Runnheim R."/>
            <person name="Forrest D."/>
            <person name="Amos-Landgraf J."/>
            <person name="Schwartz D.C."/>
            <person name="Cheng Z."/>
            <person name="Lindblad-Toh K."/>
            <person name="Eichler E.E."/>
            <person name="Ponting C.P."/>
        </authorList>
    </citation>
    <scope>NUCLEOTIDE SEQUENCE [LARGE SCALE GENOMIC DNA]</scope>
    <source>
        <strain>C57BL/6J</strain>
    </source>
</reference>
<reference evidence="14 15" key="5">
    <citation type="journal article" date="2004" name="Genome Res.">
        <title>The status, quality, and expansion of the NIH full-length cDNA project: the Mammalian Gene Collection (MGC).</title>
        <authorList>
            <consortium name="The MGC Project Team"/>
        </authorList>
    </citation>
    <scope>NUCLEOTIDE SEQUENCE [LARGE SCALE MRNA] (ISOFORM 7)</scope>
    <scope>NUCLEOTIDE SEQUENCE [LARGE SCALE MRNA] OF 874-1946 (ISOFORM 3)</scope>
    <source>
        <strain evidence="15">129/Sv X 129SvCp</strain>
        <strain>FVB/N</strain>
        <tissue>Colon</tissue>
        <tissue evidence="15">Embryonic stem cell</tissue>
    </source>
</reference>
<reference key="6">
    <citation type="journal article" date="2003" name="J. Biol. Chem.">
        <title>Identification of targets for calcium signaling through the copine family of proteins. Characterization of a coiled-coil copine-binding motif.</title>
        <authorList>
            <person name="Tomsig J.L."/>
            <person name="Snyder S.L."/>
            <person name="Creutz C.E."/>
        </authorList>
    </citation>
    <scope>INTERACTION WITH CPNE4</scope>
</reference>
<reference key="7">
    <citation type="journal article" date="2006" name="Mol. Cell. Proteomics">
        <title>O-linked N-acetylglucosamine proteomics of postsynaptic density preparations using lectin weak affinity chromatography and mass spectrometry.</title>
        <authorList>
            <person name="Vosseller K."/>
            <person name="Trinidad J.C."/>
            <person name="Chalkley R.J."/>
            <person name="Specht C.G."/>
            <person name="Thalhammer A."/>
            <person name="Lynn A.J."/>
            <person name="Snedecor J.O."/>
            <person name="Guan S."/>
            <person name="Medzihradszky K.F."/>
            <person name="Maltby D.A."/>
            <person name="Schoepfer R."/>
            <person name="Burlingame A.L."/>
        </authorList>
    </citation>
    <scope>GLYCOSYLATION [LARGE SCALE ANALYSIS] AT SER-357</scope>
    <source>
        <tissue>Brain</tissue>
    </source>
</reference>
<reference key="8">
    <citation type="journal article" date="2007" name="Mol. Cell. Proteomics">
        <title>Qualitative and quantitative analyses of protein phosphorylation in naive and stimulated mouse synaptosomal preparations.</title>
        <authorList>
            <person name="Munton R.P."/>
            <person name="Tweedie-Cullen R."/>
            <person name="Livingstone-Zatchej M."/>
            <person name="Weinandy F."/>
            <person name="Waidelich M."/>
            <person name="Longo D."/>
            <person name="Gehrig P."/>
            <person name="Potthast F."/>
            <person name="Rutishauser D."/>
            <person name="Gerrits B."/>
            <person name="Panse C."/>
            <person name="Schlapbach R."/>
            <person name="Mansuy I.M."/>
        </authorList>
    </citation>
    <scope>IDENTIFICATION BY MASS SPECTROMETRY [LARGE SCALE ANALYSIS]</scope>
    <source>
        <tissue>Brain cortex</tissue>
    </source>
</reference>
<reference key="9">
    <citation type="journal article" date="2007" name="Proc. Natl. Acad. Sci. U.S.A.">
        <title>Large-scale phosphorylation analysis of mouse liver.</title>
        <authorList>
            <person name="Villen J."/>
            <person name="Beausoleil S.A."/>
            <person name="Gerber S.A."/>
            <person name="Gygi S.P."/>
        </authorList>
    </citation>
    <scope>PHOSPHORYLATION [LARGE SCALE ANALYSIS] AT SER-474</scope>
    <scope>IDENTIFICATION BY MASS SPECTROMETRY [LARGE SCALE ANALYSIS]</scope>
    <source>
        <tissue>Liver</tissue>
    </source>
</reference>
<reference key="10">
    <citation type="journal article" date="2010" name="Cell">
        <title>A tissue-specific atlas of mouse protein phosphorylation and expression.</title>
        <authorList>
            <person name="Huttlin E.L."/>
            <person name="Jedrychowski M.P."/>
            <person name="Elias J.E."/>
            <person name="Goswami T."/>
            <person name="Rad R."/>
            <person name="Beausoleil S.A."/>
            <person name="Villen J."/>
            <person name="Haas W."/>
            <person name="Sowa M.E."/>
            <person name="Gygi S.P."/>
        </authorList>
    </citation>
    <scope>PHOSPHORYLATION [LARGE SCALE ANALYSIS] AT SER-169; TYR-244; SER-361; SER-365; SER-809; SER-1032; SER-1035; SER-1038; SER-1049; SER-1466; SER-1843; SER-1899; SER-1902 AND SER-1905</scope>
    <scope>IDENTIFICATION BY MASS SPECTROMETRY [LARGE SCALE ANALYSIS]</scope>
    <source>
        <tissue>Brain</tissue>
        <tissue>Brown adipose tissue</tissue>
        <tissue>Heart</tissue>
        <tissue>Kidney</tissue>
        <tissue>Lung</tissue>
        <tissue>Pancreas</tissue>
        <tissue>Testis</tissue>
    </source>
</reference>
<comment type="function">
    <text evidence="8">Required for normal development of intervertebral disks.</text>
</comment>
<comment type="subunit">
    <text evidence="5">Interacts with CPNE4 (via VWFA domain) (PubMed:12522145).</text>
</comment>
<comment type="subcellular location">
    <subcellularLocation>
        <location evidence="1">Cytoplasm</location>
        <location evidence="1">Cytoskeleton</location>
        <location evidence="1">Microtubule organizing center</location>
        <location evidence="1">Centrosome</location>
    </subcellularLocation>
    <subcellularLocation>
        <location evidence="8">Cytoplasm</location>
    </subcellularLocation>
</comment>
<comment type="alternative products">
    <event type="alternative splicing"/>
    <isoform>
        <id>A2AQ25-1</id>
        <name>1</name>
        <sequence type="displayed"/>
    </isoform>
    <isoform>
        <id>A2AQ25-2</id>
        <name>2</name>
        <sequence type="described" ref="VSP_052416 VSP_052418"/>
    </isoform>
    <isoform>
        <id>A2AQ25-3</id>
        <name evidence="8">3</name>
        <name evidence="8">Skt-a</name>
        <sequence type="described" ref="VSP_052418 VSP_052421"/>
    </isoform>
    <isoform>
        <id>A2AQ25-4</id>
        <name evidence="8">4</name>
        <name evidence="8">Skt-b</name>
        <sequence type="described" ref="VSP_052418 VSP_052420 VSP_052421"/>
    </isoform>
    <isoform>
        <id>A2AQ25-5</id>
        <name>5</name>
        <sequence type="described" ref="VSP_052416 VSP_052418 VSP_052424 VSP_052425 VSP_052426"/>
    </isoform>
    <isoform>
        <id>A2AQ25-6</id>
        <name>6</name>
        <sequence type="described" ref="VSP_052416 VSP_052418 VSP_052421 VSP_052425 VSP_052426"/>
    </isoform>
    <isoform>
        <id>A2AQ25-7</id>
        <name evidence="6 7">7</name>
        <sequence type="described" ref="VSP_052417"/>
    </isoform>
    <isoform>
        <id>A2AQ25-8</id>
        <name evidence="4">8</name>
        <sequence type="described" ref="VSP_052418 VSP_052419"/>
    </isoform>
    <isoform>
        <id>A2AQ25-9</id>
        <name evidence="7">9</name>
        <sequence type="described" ref="VSP_052416 VSP_052418 VSP_052420 VSP_052422 VSP_052423"/>
    </isoform>
</comment>
<comment type="tissue specificity">
    <text evidence="8">Expressed predominantly in the notochord and mesonephros during embryogenesis as well as in other areas such as the epithalamus sulcus, lens vesicle, inner retinal layer, heart, hepatic primordial surface, infundibulum, surface ectoderm, hind gut and limb bud mesenchyme. In adults, expressed in a range of tissues including the nucleus pulposus, corpus callosum, kidney, cardiac muscle, Sertoli cells and hair follicles.</text>
</comment>
<comment type="disruption phenotype">
    <text evidence="8">Mice display a kinky-tail phenotype in about half of homozygotes with defects in the nucleus pulposus and annulus fibrosus of intertebral disks. Shortening and curving of caudal vertebrae 20-25 is apparent by the age of 2 weeks.</text>
</comment>
<comment type="sequence caution" evidence="14">
    <conflict type="erroneous initiation">
        <sequence resource="EMBL-CDS" id="AAH26657"/>
    </conflict>
</comment>
<comment type="sequence caution" evidence="14">
    <conflict type="erroneous initiation">
        <sequence resource="EMBL-CDS" id="BAC41473"/>
    </conflict>
</comment>
<dbReference type="EMBL" id="AB125594">
    <property type="protein sequence ID" value="BAD14929.1"/>
    <property type="molecule type" value="mRNA"/>
</dbReference>
<dbReference type="EMBL" id="AB125595">
    <property type="protein sequence ID" value="BAD14930.1"/>
    <property type="molecule type" value="mRNA"/>
</dbReference>
<dbReference type="EMBL" id="AB093289">
    <property type="protein sequence ID" value="BAC41473.2"/>
    <property type="status" value="ALT_INIT"/>
    <property type="molecule type" value="mRNA"/>
</dbReference>
<dbReference type="EMBL" id="AK052733">
    <property type="protein sequence ID" value="BAC35121.1"/>
    <property type="molecule type" value="mRNA"/>
</dbReference>
<dbReference type="EMBL" id="AK054453">
    <property type="protein sequence ID" value="BAC35783.1"/>
    <property type="molecule type" value="mRNA"/>
</dbReference>
<dbReference type="EMBL" id="AL844538">
    <property type="status" value="NOT_ANNOTATED_CDS"/>
    <property type="molecule type" value="Genomic_DNA"/>
</dbReference>
<dbReference type="EMBL" id="AL929100">
    <property type="status" value="NOT_ANNOTATED_CDS"/>
    <property type="molecule type" value="Genomic_DNA"/>
</dbReference>
<dbReference type="EMBL" id="BC026657">
    <property type="protein sequence ID" value="AAH26657.2"/>
    <property type="status" value="ALT_INIT"/>
    <property type="molecule type" value="mRNA"/>
</dbReference>
<dbReference type="EMBL" id="BC050016">
    <property type="protein sequence ID" value="AAH50016.1"/>
    <property type="molecule type" value="mRNA"/>
</dbReference>
<dbReference type="CCDS" id="CCDS50510.1">
    <molecule id="A2AQ25-4"/>
</dbReference>
<dbReference type="CCDS" id="CCDS50511.1">
    <molecule id="A2AQ25-3"/>
</dbReference>
<dbReference type="CCDS" id="CCDS89430.1">
    <molecule id="A2AQ25-1"/>
</dbReference>
<dbReference type="RefSeq" id="NP_001074475.1">
    <property type="nucleotide sequence ID" value="NM_001081006.1"/>
</dbReference>
<dbReference type="RefSeq" id="NP_001171101.2">
    <property type="nucleotide sequence ID" value="NM_001177630.2"/>
</dbReference>
<dbReference type="RefSeq" id="NP_084171.2">
    <molecule id="A2AQ25-4"/>
    <property type="nucleotide sequence ID" value="NM_029895.4"/>
</dbReference>
<dbReference type="RefSeq" id="NP_835160.2">
    <molecule id="A2AQ25-3"/>
    <property type="nucleotide sequence ID" value="NM_178059.5"/>
</dbReference>
<dbReference type="RefSeq" id="XP_006497478.1">
    <property type="nucleotide sequence ID" value="XM_006497415.3"/>
</dbReference>
<dbReference type="RefSeq" id="XP_006497487.1">
    <molecule id="A2AQ25-2"/>
    <property type="nucleotide sequence ID" value="XM_006497424.3"/>
</dbReference>
<dbReference type="SMR" id="A2AQ25"/>
<dbReference type="BioGRID" id="228993">
    <property type="interactions" value="22"/>
</dbReference>
<dbReference type="FunCoup" id="A2AQ25">
    <property type="interactions" value="776"/>
</dbReference>
<dbReference type="IntAct" id="A2AQ25">
    <property type="interactions" value="11"/>
</dbReference>
<dbReference type="MINT" id="A2AQ25"/>
<dbReference type="STRING" id="10090.ENSMUSP00000110274"/>
<dbReference type="GlyCosmos" id="A2AQ25">
    <property type="glycosylation" value="1 site, No reported glycans"/>
</dbReference>
<dbReference type="GlyGen" id="A2AQ25">
    <property type="glycosylation" value="15 sites, 1 N-linked glycan (1 site), 1 O-linked glycan (12 sites)"/>
</dbReference>
<dbReference type="iPTMnet" id="A2AQ25"/>
<dbReference type="PhosphoSitePlus" id="A2AQ25"/>
<dbReference type="SwissPalm" id="A2AQ25"/>
<dbReference type="PeptideAtlas" id="A2AQ25"/>
<dbReference type="ProteomicsDB" id="257029">
    <molecule id="A2AQ25-1"/>
</dbReference>
<dbReference type="ProteomicsDB" id="257030">
    <molecule id="A2AQ25-2"/>
</dbReference>
<dbReference type="ProteomicsDB" id="257031">
    <molecule id="A2AQ25-3"/>
</dbReference>
<dbReference type="ProteomicsDB" id="257032">
    <molecule id="A2AQ25-4"/>
</dbReference>
<dbReference type="ProteomicsDB" id="257033">
    <molecule id="A2AQ25-5"/>
</dbReference>
<dbReference type="ProteomicsDB" id="257034">
    <molecule id="A2AQ25-6"/>
</dbReference>
<dbReference type="ProteomicsDB" id="257036">
    <molecule id="A2AQ25-8"/>
</dbReference>
<dbReference type="ProteomicsDB" id="257037">
    <molecule id="A2AQ25-9"/>
</dbReference>
<dbReference type="Pumba" id="A2AQ25"/>
<dbReference type="Antibodypedia" id="1578">
    <property type="antibodies" value="27 antibodies from 14 providers"/>
</dbReference>
<dbReference type="Ensembl" id="ENSMUST00000045555.11">
    <molecule id="A2AQ25-3"/>
    <property type="protein sequence ID" value="ENSMUSP00000041431.5"/>
    <property type="gene ID" value="ENSMUSG00000036617.18"/>
</dbReference>
<dbReference type="Ensembl" id="ENSMUST00000066509.10">
    <molecule id="A2AQ25-1"/>
    <property type="protein sequence ID" value="ENSMUSP00000066170.4"/>
    <property type="gene ID" value="ENSMUSG00000036617.18"/>
</dbReference>
<dbReference type="Ensembl" id="ENSMUST00000114606.8">
    <molecule id="A2AQ25-6"/>
    <property type="protein sequence ID" value="ENSMUSP00000110253.2"/>
    <property type="gene ID" value="ENSMUSG00000036617.18"/>
</dbReference>
<dbReference type="Ensembl" id="ENSMUST00000114607.8">
    <molecule id="A2AQ25-5"/>
    <property type="protein sequence ID" value="ENSMUSP00000110254.2"/>
    <property type="gene ID" value="ENSMUSG00000036617.18"/>
</dbReference>
<dbReference type="Ensembl" id="ENSMUST00000114608.3">
    <molecule id="A2AQ25-2"/>
    <property type="protein sequence ID" value="ENSMUSP00000110255.2"/>
    <property type="gene ID" value="ENSMUSG00000036617.18"/>
</dbReference>
<dbReference type="Ensembl" id="ENSMUST00000114614.8">
    <molecule id="A2AQ25-4"/>
    <property type="protein sequence ID" value="ENSMUSP00000110261.2"/>
    <property type="gene ID" value="ENSMUSG00000036617.18"/>
</dbReference>
<dbReference type="GeneID" id="208618"/>
<dbReference type="KEGG" id="mmu:208618"/>
<dbReference type="UCSC" id="uc008imn.1">
    <molecule id="A2AQ25-3"/>
    <property type="organism name" value="mouse"/>
</dbReference>
<dbReference type="UCSC" id="uc008imo.1">
    <molecule id="A2AQ25-4"/>
    <property type="organism name" value="mouse"/>
</dbReference>
<dbReference type="UCSC" id="uc008imp.1">
    <molecule id="A2AQ25-7"/>
    <property type="organism name" value="mouse"/>
</dbReference>
<dbReference type="UCSC" id="uc008imq.1">
    <molecule id="A2AQ25-1"/>
    <property type="organism name" value="mouse"/>
</dbReference>
<dbReference type="UCSC" id="uc008ims.1">
    <molecule id="A2AQ25-6"/>
    <property type="organism name" value="mouse"/>
</dbReference>
<dbReference type="UCSC" id="uc008imt.1">
    <molecule id="A2AQ25-9"/>
    <property type="organism name" value="mouse"/>
</dbReference>
<dbReference type="AGR" id="MGI:95454"/>
<dbReference type="CTD" id="100144434"/>
<dbReference type="MGI" id="MGI:95454">
    <property type="gene designation" value="Etl4"/>
</dbReference>
<dbReference type="VEuPathDB" id="HostDB:ENSMUSG00000036617"/>
<dbReference type="eggNOG" id="ENOG502QQCT">
    <property type="taxonomic scope" value="Eukaryota"/>
</dbReference>
<dbReference type="GeneTree" id="ENSGT00940000156098"/>
<dbReference type="HOGENOM" id="CLU_002507_2_1_1"/>
<dbReference type="InParanoid" id="A2AQ25"/>
<dbReference type="OrthoDB" id="6022652at2759"/>
<dbReference type="PhylomeDB" id="A2AQ25"/>
<dbReference type="TreeFam" id="TF332255"/>
<dbReference type="BioGRID-ORCS" id="208618">
    <property type="hits" value="4 hits in 77 CRISPR screens"/>
</dbReference>
<dbReference type="ChiTaRS" id="Etl4">
    <property type="organism name" value="mouse"/>
</dbReference>
<dbReference type="PRO" id="PR:A2AQ25"/>
<dbReference type="Proteomes" id="UP000000589">
    <property type="component" value="Chromosome 2"/>
</dbReference>
<dbReference type="RNAct" id="A2AQ25">
    <property type="molecule type" value="protein"/>
</dbReference>
<dbReference type="Bgee" id="ENSMUSG00000036617">
    <property type="expression patterns" value="Expressed in undifferentiated genital tubercle and 262 other cell types or tissues"/>
</dbReference>
<dbReference type="ExpressionAtlas" id="A2AQ25">
    <property type="expression patterns" value="baseline and differential"/>
</dbReference>
<dbReference type="GO" id="GO:0005813">
    <property type="term" value="C:centrosome"/>
    <property type="evidence" value="ECO:0000250"/>
    <property type="project" value="UniProtKB"/>
</dbReference>
<dbReference type="GO" id="GO:0005737">
    <property type="term" value="C:cytoplasm"/>
    <property type="evidence" value="ECO:0000314"/>
    <property type="project" value="UniProtKB"/>
</dbReference>
<dbReference type="GO" id="GO:0048706">
    <property type="term" value="P:embryonic skeletal system development"/>
    <property type="evidence" value="ECO:0000315"/>
    <property type="project" value="UniProtKB"/>
</dbReference>
<dbReference type="FunFam" id="1.20.58.1540:FF:000001">
    <property type="entry name" value="SRC kinase signaling inhibitor 1"/>
    <property type="match status" value="1"/>
</dbReference>
<dbReference type="Gene3D" id="1.20.58.1540">
    <property type="entry name" value="Actin interacting protein 3, C-terminal domain"/>
    <property type="match status" value="1"/>
</dbReference>
<dbReference type="InterPro" id="IPR022782">
    <property type="entry name" value="AIP3-like_C"/>
</dbReference>
<dbReference type="InterPro" id="IPR051825">
    <property type="entry name" value="SRCIN1"/>
</dbReference>
<dbReference type="PANTHER" id="PTHR22741">
    <property type="entry name" value="P140CAP/SNIP-RELATED"/>
    <property type="match status" value="1"/>
</dbReference>
<dbReference type="PANTHER" id="PTHR22741:SF11">
    <property type="entry name" value="SICKLE TAIL PROTEIN HOMOLOG"/>
    <property type="match status" value="1"/>
</dbReference>
<dbReference type="Pfam" id="PF03915">
    <property type="entry name" value="AIP3"/>
    <property type="match status" value="2"/>
</dbReference>
<protein>
    <recommendedName>
        <fullName>Sickle tail protein</fullName>
    </recommendedName>
    <alternativeName>
        <fullName>Enhancer trap locus 4</fullName>
    </alternativeName>
</protein>